<gene>
    <name evidence="1" type="primary">petG</name>
    <name type="ordered locus">P9215_11931</name>
</gene>
<feature type="chain" id="PRO_1000060221" description="Cytochrome b6-f complex subunit 5">
    <location>
        <begin position="1"/>
        <end position="39"/>
    </location>
</feature>
<feature type="transmembrane region" description="Helical" evidence="1">
    <location>
        <begin position="5"/>
        <end position="25"/>
    </location>
</feature>
<organism>
    <name type="scientific">Prochlorococcus marinus (strain MIT 9215)</name>
    <dbReference type="NCBI Taxonomy" id="93060"/>
    <lineage>
        <taxon>Bacteria</taxon>
        <taxon>Bacillati</taxon>
        <taxon>Cyanobacteriota</taxon>
        <taxon>Cyanophyceae</taxon>
        <taxon>Synechococcales</taxon>
        <taxon>Prochlorococcaceae</taxon>
        <taxon>Prochlorococcus</taxon>
    </lineage>
</organism>
<accession>A8G5C7</accession>
<dbReference type="EMBL" id="CP000825">
    <property type="protein sequence ID" value="ABV50808.1"/>
    <property type="molecule type" value="Genomic_DNA"/>
</dbReference>
<dbReference type="RefSeq" id="WP_011376619.1">
    <property type="nucleotide sequence ID" value="NC_009840.1"/>
</dbReference>
<dbReference type="SMR" id="A8G5C7"/>
<dbReference type="STRING" id="93060.P9215_11931"/>
<dbReference type="KEGG" id="pmh:P9215_11931"/>
<dbReference type="HOGENOM" id="CLU_216962_0_0_3"/>
<dbReference type="OrthoDB" id="428448at2"/>
<dbReference type="Proteomes" id="UP000002014">
    <property type="component" value="Chromosome"/>
</dbReference>
<dbReference type="GO" id="GO:0009512">
    <property type="term" value="C:cytochrome b6f complex"/>
    <property type="evidence" value="ECO:0007669"/>
    <property type="project" value="InterPro"/>
</dbReference>
<dbReference type="GO" id="GO:0031676">
    <property type="term" value="C:plasma membrane-derived thylakoid membrane"/>
    <property type="evidence" value="ECO:0007669"/>
    <property type="project" value="UniProtKB-SubCell"/>
</dbReference>
<dbReference type="GO" id="GO:0045158">
    <property type="term" value="F:electron transporter, transferring electrons within cytochrome b6/f complex of photosystem II activity"/>
    <property type="evidence" value="ECO:0007669"/>
    <property type="project" value="UniProtKB-UniRule"/>
</dbReference>
<dbReference type="GO" id="GO:0017004">
    <property type="term" value="P:cytochrome complex assembly"/>
    <property type="evidence" value="ECO:0007669"/>
    <property type="project" value="UniProtKB-UniRule"/>
</dbReference>
<dbReference type="GO" id="GO:0015979">
    <property type="term" value="P:photosynthesis"/>
    <property type="evidence" value="ECO:0007669"/>
    <property type="project" value="UniProtKB-KW"/>
</dbReference>
<dbReference type="HAMAP" id="MF_00432">
    <property type="entry name" value="Cytb6_f_PetG"/>
    <property type="match status" value="1"/>
</dbReference>
<dbReference type="InterPro" id="IPR003683">
    <property type="entry name" value="Cyt_6/f_cplx_su5"/>
</dbReference>
<dbReference type="InterPro" id="IPR036099">
    <property type="entry name" value="Cyt_6/f_cplx_su5_sf"/>
</dbReference>
<dbReference type="NCBIfam" id="NF001907">
    <property type="entry name" value="PRK00665.1"/>
    <property type="match status" value="1"/>
</dbReference>
<dbReference type="Pfam" id="PF02529">
    <property type="entry name" value="PetG"/>
    <property type="match status" value="1"/>
</dbReference>
<dbReference type="PIRSF" id="PIRSF000034">
    <property type="entry name" value="Cyt_b6-f_V"/>
    <property type="match status" value="1"/>
</dbReference>
<dbReference type="SUPFAM" id="SSF103446">
    <property type="entry name" value="PetG subunit of the cytochrome b6f complex"/>
    <property type="match status" value="1"/>
</dbReference>
<evidence type="ECO:0000255" key="1">
    <source>
        <dbReference type="HAMAP-Rule" id="MF_00432"/>
    </source>
</evidence>
<name>PETG_PROM2</name>
<sequence length="39" mass="4275">MIEPLLCGIVLGLVPITLLGLFVSAWNQYRRGSGMLDID</sequence>
<proteinExistence type="inferred from homology"/>
<protein>
    <recommendedName>
        <fullName evidence="1">Cytochrome b6-f complex subunit 5</fullName>
    </recommendedName>
    <alternativeName>
        <fullName evidence="1">Cytochrome b6-f complex subunit PetG</fullName>
    </alternativeName>
    <alternativeName>
        <fullName evidence="1">Cytochrome b6-f complex subunit V</fullName>
    </alternativeName>
</protein>
<reference key="1">
    <citation type="journal article" date="2007" name="PLoS Genet.">
        <title>Patterns and implications of gene gain and loss in the evolution of Prochlorococcus.</title>
        <authorList>
            <person name="Kettler G.C."/>
            <person name="Martiny A.C."/>
            <person name="Huang K."/>
            <person name="Zucker J."/>
            <person name="Coleman M.L."/>
            <person name="Rodrigue S."/>
            <person name="Chen F."/>
            <person name="Lapidus A."/>
            <person name="Ferriera S."/>
            <person name="Johnson J."/>
            <person name="Steglich C."/>
            <person name="Church G.M."/>
            <person name="Richardson P."/>
            <person name="Chisholm S.W."/>
        </authorList>
    </citation>
    <scope>NUCLEOTIDE SEQUENCE [LARGE SCALE GENOMIC DNA]</scope>
    <source>
        <strain>MIT 9215</strain>
    </source>
</reference>
<comment type="function">
    <text evidence="1">Component of the cytochrome b6-f complex, which mediates electron transfer between photosystem II (PSII) and photosystem I (PSI), cyclic electron flow around PSI, and state transitions. PetG is required for either the stability or assembly of the cytochrome b6-f complex.</text>
</comment>
<comment type="subunit">
    <text evidence="1">The 4 large subunits of the cytochrome b6-f complex are cytochrome b6, subunit IV (17 kDa polypeptide, PetD), cytochrome f and the Rieske protein, while the 4 small subunits are PetG, PetL, PetM and PetN. The complex functions as a dimer.</text>
</comment>
<comment type="subcellular location">
    <subcellularLocation>
        <location evidence="1">Cellular thylakoid membrane</location>
        <topology evidence="1">Single-pass membrane protein</topology>
    </subcellularLocation>
</comment>
<comment type="similarity">
    <text evidence="1">Belongs to the PetG family.</text>
</comment>
<keyword id="KW-0249">Electron transport</keyword>
<keyword id="KW-0472">Membrane</keyword>
<keyword id="KW-0602">Photosynthesis</keyword>
<keyword id="KW-0793">Thylakoid</keyword>
<keyword id="KW-0812">Transmembrane</keyword>
<keyword id="KW-1133">Transmembrane helix</keyword>
<keyword id="KW-0813">Transport</keyword>